<organism>
    <name type="scientific">Rhizobium etli (strain CIAT 652)</name>
    <dbReference type="NCBI Taxonomy" id="491916"/>
    <lineage>
        <taxon>Bacteria</taxon>
        <taxon>Pseudomonadati</taxon>
        <taxon>Pseudomonadota</taxon>
        <taxon>Alphaproteobacteria</taxon>
        <taxon>Hyphomicrobiales</taxon>
        <taxon>Rhizobiaceae</taxon>
        <taxon>Rhizobium/Agrobacterium group</taxon>
        <taxon>Rhizobium</taxon>
    </lineage>
</organism>
<feature type="chain" id="PRO_1000124536" description="Transcriptional repressor NrdR">
    <location>
        <begin position="1"/>
        <end position="158"/>
    </location>
</feature>
<feature type="domain" description="ATP-cone" evidence="1">
    <location>
        <begin position="49"/>
        <end position="139"/>
    </location>
</feature>
<feature type="zinc finger region" evidence="1">
    <location>
        <begin position="3"/>
        <end position="34"/>
    </location>
</feature>
<feature type="region of interest" description="Disordered" evidence="2">
    <location>
        <begin position="1"/>
        <end position="22"/>
    </location>
</feature>
<feature type="compositionally biased region" description="Basic and acidic residues" evidence="2">
    <location>
        <begin position="11"/>
        <end position="22"/>
    </location>
</feature>
<keyword id="KW-0067">ATP-binding</keyword>
<keyword id="KW-0238">DNA-binding</keyword>
<keyword id="KW-0479">Metal-binding</keyword>
<keyword id="KW-0547">Nucleotide-binding</keyword>
<keyword id="KW-0678">Repressor</keyword>
<keyword id="KW-0804">Transcription</keyword>
<keyword id="KW-0805">Transcription regulation</keyword>
<keyword id="KW-0862">Zinc</keyword>
<keyword id="KW-0863">Zinc-finger</keyword>
<dbReference type="EMBL" id="CP001074">
    <property type="protein sequence ID" value="ACE90557.1"/>
    <property type="molecule type" value="Genomic_DNA"/>
</dbReference>
<dbReference type="SMR" id="B3PVB6"/>
<dbReference type="KEGG" id="rec:RHECIAT_CH0001579"/>
<dbReference type="eggNOG" id="COG1327">
    <property type="taxonomic scope" value="Bacteria"/>
</dbReference>
<dbReference type="HOGENOM" id="CLU_108412_0_1_5"/>
<dbReference type="Proteomes" id="UP000008817">
    <property type="component" value="Chromosome"/>
</dbReference>
<dbReference type="GO" id="GO:0005524">
    <property type="term" value="F:ATP binding"/>
    <property type="evidence" value="ECO:0007669"/>
    <property type="project" value="UniProtKB-KW"/>
</dbReference>
<dbReference type="GO" id="GO:0003677">
    <property type="term" value="F:DNA binding"/>
    <property type="evidence" value="ECO:0007669"/>
    <property type="project" value="UniProtKB-KW"/>
</dbReference>
<dbReference type="GO" id="GO:0008270">
    <property type="term" value="F:zinc ion binding"/>
    <property type="evidence" value="ECO:0007669"/>
    <property type="project" value="UniProtKB-UniRule"/>
</dbReference>
<dbReference type="GO" id="GO:0045892">
    <property type="term" value="P:negative regulation of DNA-templated transcription"/>
    <property type="evidence" value="ECO:0007669"/>
    <property type="project" value="UniProtKB-UniRule"/>
</dbReference>
<dbReference type="HAMAP" id="MF_00440">
    <property type="entry name" value="NrdR"/>
    <property type="match status" value="1"/>
</dbReference>
<dbReference type="InterPro" id="IPR005144">
    <property type="entry name" value="ATP-cone_dom"/>
</dbReference>
<dbReference type="InterPro" id="IPR055173">
    <property type="entry name" value="NrdR-like_N"/>
</dbReference>
<dbReference type="InterPro" id="IPR003796">
    <property type="entry name" value="RNR_NrdR-like"/>
</dbReference>
<dbReference type="NCBIfam" id="TIGR00244">
    <property type="entry name" value="transcriptional regulator NrdR"/>
    <property type="match status" value="1"/>
</dbReference>
<dbReference type="PANTHER" id="PTHR30455">
    <property type="entry name" value="TRANSCRIPTIONAL REPRESSOR NRDR"/>
    <property type="match status" value="1"/>
</dbReference>
<dbReference type="PANTHER" id="PTHR30455:SF2">
    <property type="entry name" value="TRANSCRIPTIONAL REPRESSOR NRDR"/>
    <property type="match status" value="1"/>
</dbReference>
<dbReference type="Pfam" id="PF03477">
    <property type="entry name" value="ATP-cone"/>
    <property type="match status" value="1"/>
</dbReference>
<dbReference type="Pfam" id="PF22811">
    <property type="entry name" value="Zn_ribbon_NrdR"/>
    <property type="match status" value="1"/>
</dbReference>
<dbReference type="PROSITE" id="PS51161">
    <property type="entry name" value="ATP_CONE"/>
    <property type="match status" value="1"/>
</dbReference>
<reference key="1">
    <citation type="journal article" date="2010" name="Appl. Environ. Microbiol.">
        <title>Conserved symbiotic plasmid DNA sequences in the multireplicon pangenomic structure of Rhizobium etli.</title>
        <authorList>
            <person name="Gonzalez V."/>
            <person name="Acosta J.L."/>
            <person name="Santamaria R.I."/>
            <person name="Bustos P."/>
            <person name="Fernandez J.L."/>
            <person name="Hernandez Gonzalez I.L."/>
            <person name="Diaz R."/>
            <person name="Flores M."/>
            <person name="Palacios R."/>
            <person name="Mora J."/>
            <person name="Davila G."/>
        </authorList>
    </citation>
    <scope>NUCLEOTIDE SEQUENCE [LARGE SCALE GENOMIC DNA]</scope>
    <source>
        <strain>CIAT 652</strain>
    </source>
</reference>
<accession>B3PVB6</accession>
<sequence length="158" mass="18261">MRCPYCGSEDTQVKDSRPAEDNTSIRRRRICPDCGGRFTTFERVQLRELMVIKKTGRKVPFDRDKLVRSFEVALRKRPVERDRIERAVSGIVRRLESSGETEISSEQIGLQVLEAMKSLDDVGFVRYASVYRDFSLAEDFEKVISEINAKIARDPLDR</sequence>
<protein>
    <recommendedName>
        <fullName evidence="1">Transcriptional repressor NrdR</fullName>
    </recommendedName>
</protein>
<gene>
    <name evidence="1" type="primary">nrdR</name>
    <name type="ordered locus">RHECIAT_CH0001579</name>
</gene>
<evidence type="ECO:0000255" key="1">
    <source>
        <dbReference type="HAMAP-Rule" id="MF_00440"/>
    </source>
</evidence>
<evidence type="ECO:0000256" key="2">
    <source>
        <dbReference type="SAM" id="MobiDB-lite"/>
    </source>
</evidence>
<proteinExistence type="inferred from homology"/>
<comment type="function">
    <text evidence="1">Negatively regulates transcription of bacterial ribonucleotide reductase nrd genes and operons by binding to NrdR-boxes.</text>
</comment>
<comment type="cofactor">
    <cofactor evidence="1">
        <name>Zn(2+)</name>
        <dbReference type="ChEBI" id="CHEBI:29105"/>
    </cofactor>
    <text evidence="1">Binds 1 zinc ion.</text>
</comment>
<comment type="similarity">
    <text evidence="1">Belongs to the NrdR family.</text>
</comment>
<name>NRDR_RHIE6</name>